<protein>
    <recommendedName>
        <fullName evidence="11">NuA3 HAT complex component PDP3</fullName>
    </recommendedName>
    <alternativeName>
        <fullName evidence="10">PWWP domain-containing protein YLR455W</fullName>
    </alternativeName>
</protein>
<organism>
    <name type="scientific">Saccharomyces cerevisiae (strain ATCC 204508 / S288c)</name>
    <name type="common">Baker's yeast</name>
    <dbReference type="NCBI Taxonomy" id="559292"/>
    <lineage>
        <taxon>Eukaryota</taxon>
        <taxon>Fungi</taxon>
        <taxon>Dikarya</taxon>
        <taxon>Ascomycota</taxon>
        <taxon>Saccharomycotina</taxon>
        <taxon>Saccharomycetes</taxon>
        <taxon>Saccharomycetales</taxon>
        <taxon>Saccharomycetaceae</taxon>
        <taxon>Saccharomyces</taxon>
    </lineage>
</organism>
<evidence type="ECO:0000255" key="1">
    <source>
        <dbReference type="PROSITE-ProRule" id="PRU00162"/>
    </source>
</evidence>
<evidence type="ECO:0000256" key="2">
    <source>
        <dbReference type="SAM" id="MobiDB-lite"/>
    </source>
</evidence>
<evidence type="ECO:0000269" key="3">
    <source>
    </source>
</evidence>
<evidence type="ECO:0000269" key="4">
    <source>
    </source>
</evidence>
<evidence type="ECO:0000269" key="5">
    <source>
    </source>
</evidence>
<evidence type="ECO:0000269" key="6">
    <source>
    </source>
</evidence>
<evidence type="ECO:0000269" key="7">
    <source>
    </source>
</evidence>
<evidence type="ECO:0000269" key="8">
    <source>
    </source>
</evidence>
<evidence type="ECO:0000269" key="9">
    <source>
    </source>
</evidence>
<evidence type="ECO:0000303" key="10">
    <source>
    </source>
</evidence>
<evidence type="ECO:0000305" key="11"/>
<name>PDP3_YEAST</name>
<reference key="1">
    <citation type="journal article" date="1997" name="Nature">
        <title>The nucleotide sequence of Saccharomyces cerevisiae chromosome XII.</title>
        <authorList>
            <person name="Johnston M."/>
            <person name="Hillier L.W."/>
            <person name="Riles L."/>
            <person name="Albermann K."/>
            <person name="Andre B."/>
            <person name="Ansorge W."/>
            <person name="Benes V."/>
            <person name="Brueckner M."/>
            <person name="Delius H."/>
            <person name="Dubois E."/>
            <person name="Duesterhoeft A."/>
            <person name="Entian K.-D."/>
            <person name="Floeth M."/>
            <person name="Goffeau A."/>
            <person name="Hebling U."/>
            <person name="Heumann K."/>
            <person name="Heuss-Neitzel D."/>
            <person name="Hilbert H."/>
            <person name="Hilger F."/>
            <person name="Kleine K."/>
            <person name="Koetter P."/>
            <person name="Louis E.J."/>
            <person name="Messenguy F."/>
            <person name="Mewes H.-W."/>
            <person name="Miosga T."/>
            <person name="Moestl D."/>
            <person name="Mueller-Auer S."/>
            <person name="Nentwich U."/>
            <person name="Obermaier B."/>
            <person name="Piravandi E."/>
            <person name="Pohl T.M."/>
            <person name="Portetelle D."/>
            <person name="Purnelle B."/>
            <person name="Rechmann S."/>
            <person name="Rieger M."/>
            <person name="Rinke M."/>
            <person name="Rose M."/>
            <person name="Scharfe M."/>
            <person name="Scherens B."/>
            <person name="Scholler P."/>
            <person name="Schwager C."/>
            <person name="Schwarz S."/>
            <person name="Underwood A.P."/>
            <person name="Urrestarazu L.A."/>
            <person name="Vandenbol M."/>
            <person name="Verhasselt P."/>
            <person name="Vierendeels F."/>
            <person name="Voet M."/>
            <person name="Volckaert G."/>
            <person name="Voss H."/>
            <person name="Wambutt R."/>
            <person name="Wedler E."/>
            <person name="Wedler H."/>
            <person name="Zimmermann F.K."/>
            <person name="Zollner A."/>
            <person name="Hani J."/>
            <person name="Hoheisel J.D."/>
        </authorList>
    </citation>
    <scope>NUCLEOTIDE SEQUENCE [LARGE SCALE GENOMIC DNA]</scope>
    <source>
        <strain>ATCC 204508 / S288c</strain>
    </source>
</reference>
<reference key="2">
    <citation type="journal article" date="2014" name="G3 (Bethesda)">
        <title>The reference genome sequence of Saccharomyces cerevisiae: Then and now.</title>
        <authorList>
            <person name="Engel S.R."/>
            <person name="Dietrich F.S."/>
            <person name="Fisk D.G."/>
            <person name="Binkley G."/>
            <person name="Balakrishnan R."/>
            <person name="Costanzo M.C."/>
            <person name="Dwight S.S."/>
            <person name="Hitz B.C."/>
            <person name="Karra K."/>
            <person name="Nash R.S."/>
            <person name="Weng S."/>
            <person name="Wong E.D."/>
            <person name="Lloyd P."/>
            <person name="Skrzypek M.S."/>
            <person name="Miyasato S.R."/>
            <person name="Simison M."/>
            <person name="Cherry J.M."/>
        </authorList>
    </citation>
    <scope>GENOME REANNOTATION</scope>
    <source>
        <strain>ATCC 204508 / S288c</strain>
    </source>
</reference>
<reference key="3">
    <citation type="journal article" date="2003" name="Nature">
        <title>Global analysis of protein localization in budding yeast.</title>
        <authorList>
            <person name="Huh W.-K."/>
            <person name="Falvo J.V."/>
            <person name="Gerke L.C."/>
            <person name="Carroll A.S."/>
            <person name="Howson R.W."/>
            <person name="Weissman J.S."/>
            <person name="O'Shea E.K."/>
        </authorList>
    </citation>
    <scope>SUBCELLULAR LOCATION [LARGE SCALE ANALYSIS]</scope>
</reference>
<reference key="4">
    <citation type="journal article" date="2003" name="Nature">
        <title>Global analysis of protein expression in yeast.</title>
        <authorList>
            <person name="Ghaemmaghami S."/>
            <person name="Huh W.-K."/>
            <person name="Bower K."/>
            <person name="Howson R.W."/>
            <person name="Belle A."/>
            <person name="Dephoure N."/>
            <person name="O'Shea E.K."/>
            <person name="Weissman J.S."/>
        </authorList>
    </citation>
    <scope>LEVEL OF PROTEIN EXPRESSION [LARGE SCALE ANALYSIS]</scope>
</reference>
<reference key="5">
    <citation type="journal article" date="2005" name="Yeast">
        <title>New weakly expressed cell cycle-regulated genes in yeast.</title>
        <authorList>
            <person name="de Lichtenberg U."/>
            <person name="Wernersson R."/>
            <person name="Jensen T.S."/>
            <person name="Nielsen H.B."/>
            <person name="Fausboell A."/>
            <person name="Schmidt P."/>
            <person name="Hansen F.B."/>
            <person name="Knudsen S."/>
            <person name="Brunak S."/>
        </authorList>
    </citation>
    <scope>INDUCTION</scope>
</reference>
<reference key="6">
    <citation type="journal article" date="2012" name="Cell Biosci.">
        <title>The nuclear localization of SWI/SNF proteins is subjected to oxygen regulation.</title>
        <authorList>
            <person name="Dastidar R.G."/>
            <person name="Hooda J."/>
            <person name="Shah A."/>
            <person name="Cao T.M."/>
            <person name="Henke R.M."/>
            <person name="Zhang L."/>
        </authorList>
    </citation>
    <scope>SUBCELLULAR LOCATION</scope>
</reference>
<reference key="7">
    <citation type="journal article" date="2014" name="Mol. Cell. Proteomics">
        <title>A PWWP domain-containing protein targets the NuA3 acetyltransferase complex via histone H3 lysine 36 trimethylation to coordinate transcriptional elongation at coding regions.</title>
        <authorList>
            <person name="Gilbert T.M."/>
            <person name="McDaniel S.L."/>
            <person name="Byrum S.D."/>
            <person name="Cades J.A."/>
            <person name="Dancy B.C."/>
            <person name="Wade H."/>
            <person name="Tackett A.J."/>
            <person name="Strahl B.D."/>
            <person name="Taverna S.D."/>
        </authorList>
    </citation>
    <scope>FUNCTION</scope>
    <scope>SUBUNIT</scope>
</reference>
<reference key="8">
    <citation type="journal article" date="2017" name="Genetics">
        <title>Histone H3K4 and H3K36 methylation independently recruit the NuA3 histone acetyltransferase in Saccharomyces cerevisiae.</title>
        <authorList>
            <person name="Martin B.J."/>
            <person name="McBurney K.L."/>
            <person name="Maltby V.E."/>
            <person name="Jensen K.N."/>
            <person name="Brind'Amour J."/>
            <person name="Howe L.J."/>
        </authorList>
    </citation>
    <scope>DOMAIN</scope>
</reference>
<reference key="9">
    <citation type="journal article" date="2022" name="Genes Dev.">
        <title>NDF is a transcription factor that stimulates elongation by RNA polymerase II.</title>
        <authorList>
            <person name="Fei J."/>
            <person name="Xu J."/>
            <person name="Li Z."/>
            <person name="Xu K."/>
            <person name="Wang D."/>
            <person name="Kassavetis G.A."/>
            <person name="Kadonaga J.T."/>
        </authorList>
    </citation>
    <scope>FUNCTION</scope>
</reference>
<dbReference type="EMBL" id="U22383">
    <property type="protein sequence ID" value="AAB64719.1"/>
    <property type="molecule type" value="Genomic_DNA"/>
</dbReference>
<dbReference type="EMBL" id="BK006945">
    <property type="protein sequence ID" value="DAA09755.1"/>
    <property type="molecule type" value="Genomic_DNA"/>
</dbReference>
<dbReference type="PIR" id="S59414">
    <property type="entry name" value="S59414"/>
</dbReference>
<dbReference type="RefSeq" id="NP_013560.3">
    <property type="nucleotide sequence ID" value="NM_001182343.3"/>
</dbReference>
<dbReference type="SMR" id="Q06188"/>
<dbReference type="BioGRID" id="31714">
    <property type="interactions" value="101"/>
</dbReference>
<dbReference type="DIP" id="DIP-3853N"/>
<dbReference type="FunCoup" id="Q06188">
    <property type="interactions" value="144"/>
</dbReference>
<dbReference type="IntAct" id="Q06188">
    <property type="interactions" value="43"/>
</dbReference>
<dbReference type="MINT" id="Q06188"/>
<dbReference type="STRING" id="4932.YLR455W"/>
<dbReference type="iPTMnet" id="Q06188"/>
<dbReference type="PaxDb" id="4932-YLR455W"/>
<dbReference type="PeptideAtlas" id="Q06188"/>
<dbReference type="EnsemblFungi" id="YLR455W_mRNA">
    <property type="protein sequence ID" value="YLR455W"/>
    <property type="gene ID" value="YLR455W"/>
</dbReference>
<dbReference type="GeneID" id="851177"/>
<dbReference type="KEGG" id="sce:YLR455W"/>
<dbReference type="AGR" id="SGD:S000004447"/>
<dbReference type="SGD" id="S000004447">
    <property type="gene designation" value="PDP3"/>
</dbReference>
<dbReference type="VEuPathDB" id="FungiDB:YLR455W"/>
<dbReference type="eggNOG" id="ENOG502QWCQ">
    <property type="taxonomic scope" value="Eukaryota"/>
</dbReference>
<dbReference type="HOGENOM" id="CLU_051401_0_0_1"/>
<dbReference type="InParanoid" id="Q06188"/>
<dbReference type="OMA" id="WEQPHRL"/>
<dbReference type="OrthoDB" id="62853at2759"/>
<dbReference type="BioCyc" id="YEAST:G3O-32508-MONOMER"/>
<dbReference type="BioGRID-ORCS" id="851177">
    <property type="hits" value="0 hits in 10 CRISPR screens"/>
</dbReference>
<dbReference type="PRO" id="PR:Q06188"/>
<dbReference type="Proteomes" id="UP000002311">
    <property type="component" value="Chromosome XII"/>
</dbReference>
<dbReference type="RNAct" id="Q06188">
    <property type="molecule type" value="protein"/>
</dbReference>
<dbReference type="GO" id="GO:0005829">
    <property type="term" value="C:cytosol"/>
    <property type="evidence" value="ECO:0000314"/>
    <property type="project" value="SGD"/>
</dbReference>
<dbReference type="GO" id="GO:0033100">
    <property type="term" value="C:NuA3 histone acetyltransferase complex"/>
    <property type="evidence" value="ECO:0000314"/>
    <property type="project" value="SGD"/>
</dbReference>
<dbReference type="GO" id="GO:1990468">
    <property type="term" value="C:NuA3b histone acetyltransferase complex"/>
    <property type="evidence" value="ECO:0000314"/>
    <property type="project" value="SGD"/>
</dbReference>
<dbReference type="GO" id="GO:0005634">
    <property type="term" value="C:nucleus"/>
    <property type="evidence" value="ECO:0000314"/>
    <property type="project" value="SGD"/>
</dbReference>
<dbReference type="GO" id="GO:0003682">
    <property type="term" value="F:chromatin binding"/>
    <property type="evidence" value="ECO:0000314"/>
    <property type="project" value="SGD"/>
</dbReference>
<dbReference type="GO" id="GO:0000993">
    <property type="term" value="F:RNA polymerase II complex binding"/>
    <property type="evidence" value="ECO:0000314"/>
    <property type="project" value="SGD"/>
</dbReference>
<dbReference type="GO" id="GO:0032968">
    <property type="term" value="P:positive regulation of transcription elongation by RNA polymerase II"/>
    <property type="evidence" value="ECO:0000314"/>
    <property type="project" value="SGD"/>
</dbReference>
<dbReference type="CDD" id="cd05840">
    <property type="entry name" value="PWWP_ScIOC4-like"/>
    <property type="match status" value="1"/>
</dbReference>
<dbReference type="FunFam" id="2.30.30.140:FF:000127">
    <property type="entry name" value="YLR455W-like protein"/>
    <property type="match status" value="1"/>
</dbReference>
<dbReference type="Gene3D" id="2.30.30.140">
    <property type="match status" value="1"/>
</dbReference>
<dbReference type="InterPro" id="IPR035503">
    <property type="entry name" value="IOC4-like_PWWP"/>
</dbReference>
<dbReference type="InterPro" id="IPR000313">
    <property type="entry name" value="PWWP_dom"/>
</dbReference>
<dbReference type="Pfam" id="PF00855">
    <property type="entry name" value="PWWP"/>
    <property type="match status" value="1"/>
</dbReference>
<dbReference type="SMART" id="SM00293">
    <property type="entry name" value="PWWP"/>
    <property type="match status" value="1"/>
</dbReference>
<dbReference type="SUPFAM" id="SSF63748">
    <property type="entry name" value="Tudor/PWWP/MBT"/>
    <property type="match status" value="1"/>
</dbReference>
<dbReference type="PROSITE" id="PS50812">
    <property type="entry name" value="PWWP"/>
    <property type="match status" value="1"/>
</dbReference>
<feature type="chain" id="PRO_0000247356" description="NuA3 HAT complex component PDP3">
    <location>
        <begin position="1"/>
        <end position="304"/>
    </location>
</feature>
<feature type="domain" description="PWWP" evidence="1">
    <location>
        <begin position="7"/>
        <end position="68"/>
    </location>
</feature>
<feature type="region of interest" description="Disordered" evidence="2">
    <location>
        <begin position="145"/>
        <end position="195"/>
    </location>
</feature>
<feature type="compositionally biased region" description="Basic and acidic residues" evidence="2">
    <location>
        <begin position="151"/>
        <end position="168"/>
    </location>
</feature>
<gene>
    <name evidence="10" type="primary">PDP3</name>
    <name type="ordered locus">YLR455W</name>
</gene>
<sequence length="304" mass="35508">MTKDIRTGDLVLCKVGSFPPWPAVVFPQRLLRNDVYRKRKSNCVAVCFFNDPTYYWEQPSRLKELDQDSIHNFILEHSKNANQRELVNAYKEAKNFDDFNVFLQEKFEEENRLSDLKAFEKSEGSKIVAGEDPFVGRTKVVNKRKKNSISIKEDPEDNQKSNEEESKPNIKPSKKKRPTANSGGKSNSGNKKKVKLDYSRRVEISQLFRRRIQRNLIQRETPPTEHEIKETHELLNRIYENSDTKRPFFDLKALRESKLHKLLKAIVNDPDLGEFHPLCKEILLSWADLITELKKEKLQALPTP</sequence>
<accession>Q06188</accession>
<accession>D6VZ89</accession>
<comment type="function">
    <text evidence="7 8 9">Histone-binding component of the NuA3b histone acetyltransferase complex. Targets the NuA3b HAT complex via histone H3K36me3 to the coding regions of actively transcribed genes to coordinate transcription elongation (PubMed:25104842, PubMed:28108585). Stimulates elongation by RNA polymerase II in vitro (PubMed:35273076).</text>
</comment>
<comment type="subunit">
    <text evidence="7">Component of the NuA3 histone acetyltransferase (HAT) complex (PubMed:25104842). The NuA3 HAT complex has 2 functionally distinct forms that participate in transcription (PubMed:25104842). The NuA3a HAT complex is composed of at least NTO1, SAS3, TAF14, YNG1 and EAF6 (PubMed:25104842). The NuA3b HAT complex contains an additional subunit, PDP3 (PubMed:25104842).</text>
</comment>
<comment type="subcellular location">
    <subcellularLocation>
        <location evidence="3 6">Nucleus</location>
    </subcellularLocation>
    <subcellularLocation>
        <location evidence="6">Cytoplasm</location>
    </subcellularLocation>
</comment>
<comment type="induction">
    <text evidence="5">During S phase of cell cycle.</text>
</comment>
<comment type="domain">
    <text evidence="8">The PWWP domain mediates the binding to H3K36me3.</text>
</comment>
<comment type="miscellaneous">
    <text evidence="4">Present with 2610 molecules/cell in log phase SD medium.</text>
</comment>
<keyword id="KW-0963">Cytoplasm</keyword>
<keyword id="KW-0539">Nucleus</keyword>
<keyword id="KW-1185">Reference proteome</keyword>
<proteinExistence type="evidence at protein level"/>